<keyword id="KW-1003">Cell membrane</keyword>
<keyword id="KW-0175">Coiled coil</keyword>
<keyword id="KW-0968">Cytoplasmic vesicle</keyword>
<keyword id="KW-0472">Membrane</keyword>
<keyword id="KW-1185">Reference proteome</keyword>
<keyword id="KW-0812">Transmembrane</keyword>
<keyword id="KW-1133">Transmembrane helix</keyword>
<keyword id="KW-0813">Transport</keyword>
<gene>
    <name type="primary">SCAMP2</name>
    <name type="synonym">SC</name>
    <name type="ordered locus">Os01g0780500</name>
    <name type="ordered locus">LOC_Os01g57220</name>
    <name type="ORF">P0010B10.29</name>
</gene>
<sequence length="286" mass="32197">MAGRYDRNPFDEDDVNPFAGGSVPPASNSRMPPLPHEPGFYNDRGATVDIPLDSTKDMKKKEKELQAKEAELNKRESELRRREEAASRAGIVIEEKNWPPFFPIIHHDISNEIPIHLQRMQYLAFSSLLGLAACLFWNIIATTAAWIKGAGVMIWLLAIIYFISGVPGAYVLWYRPLYNAMRTESALKFGWFFLFYLIHILFCIWSAVAPPFPFKGKSLAGILPAIDVIGNNAIVGIFYFIGFGLFCLESLLSVVVIQQVYMYFRGSGKAAEMKREAARGAMRSAF</sequence>
<dbReference type="EMBL" id="AF225922">
    <property type="protein sequence ID" value="AAF36688.1"/>
    <property type="molecule type" value="mRNA"/>
</dbReference>
<dbReference type="EMBL" id="AP003224">
    <property type="protein sequence ID" value="BAB63575.1"/>
    <property type="molecule type" value="Genomic_DNA"/>
</dbReference>
<dbReference type="EMBL" id="AP008207">
    <property type="protein sequence ID" value="BAF06351.1"/>
    <property type="molecule type" value="Genomic_DNA"/>
</dbReference>
<dbReference type="EMBL" id="AP014957">
    <property type="protein sequence ID" value="BAS74639.1"/>
    <property type="molecule type" value="Genomic_DNA"/>
</dbReference>
<dbReference type="EMBL" id="AK068498">
    <property type="protein sequence ID" value="BAG90929.1"/>
    <property type="molecule type" value="mRNA"/>
</dbReference>
<dbReference type="RefSeq" id="XP_015622297.1">
    <property type="nucleotide sequence ID" value="XM_015766811.1"/>
</dbReference>
<dbReference type="SMR" id="Q7F613"/>
<dbReference type="FunCoup" id="Q7F613">
    <property type="interactions" value="958"/>
</dbReference>
<dbReference type="STRING" id="39947.Q7F613"/>
<dbReference type="PaxDb" id="39947-Q7F613"/>
<dbReference type="EnsemblPlants" id="Os01t0780500-01">
    <property type="protein sequence ID" value="Os01t0780500-01"/>
    <property type="gene ID" value="Os01g0780500"/>
</dbReference>
<dbReference type="Gramene" id="Os01t0780500-01">
    <property type="protein sequence ID" value="Os01t0780500-01"/>
    <property type="gene ID" value="Os01g0780500"/>
</dbReference>
<dbReference type="KEGG" id="dosa:Os01g0780500"/>
<dbReference type="eggNOG" id="KOG3088">
    <property type="taxonomic scope" value="Eukaryota"/>
</dbReference>
<dbReference type="HOGENOM" id="CLU_066546_3_0_1"/>
<dbReference type="InParanoid" id="Q7F613"/>
<dbReference type="OMA" id="FAYYVFL"/>
<dbReference type="OrthoDB" id="242866at2759"/>
<dbReference type="Proteomes" id="UP000000763">
    <property type="component" value="Chromosome 1"/>
</dbReference>
<dbReference type="Proteomes" id="UP000059680">
    <property type="component" value="Chromosome 1"/>
</dbReference>
<dbReference type="GO" id="GO:0005886">
    <property type="term" value="C:plasma membrane"/>
    <property type="evidence" value="ECO:0007669"/>
    <property type="project" value="UniProtKB-SubCell"/>
</dbReference>
<dbReference type="GO" id="GO:0055038">
    <property type="term" value="C:recycling endosome membrane"/>
    <property type="evidence" value="ECO:0000318"/>
    <property type="project" value="GO_Central"/>
</dbReference>
<dbReference type="GO" id="GO:0032588">
    <property type="term" value="C:trans-Golgi network membrane"/>
    <property type="evidence" value="ECO:0000318"/>
    <property type="project" value="GO_Central"/>
</dbReference>
<dbReference type="GO" id="GO:0030658">
    <property type="term" value="C:transport vesicle membrane"/>
    <property type="evidence" value="ECO:0007669"/>
    <property type="project" value="UniProtKB-SubCell"/>
</dbReference>
<dbReference type="GO" id="GO:0015031">
    <property type="term" value="P:protein transport"/>
    <property type="evidence" value="ECO:0000318"/>
    <property type="project" value="GO_Central"/>
</dbReference>
<dbReference type="InterPro" id="IPR007273">
    <property type="entry name" value="SCAMP"/>
</dbReference>
<dbReference type="PANTHER" id="PTHR10687:SF75">
    <property type="entry name" value="SECRETORY CARRIER-ASSOCIATED MEMBRANE PROTEIN 5"/>
    <property type="match status" value="1"/>
</dbReference>
<dbReference type="PANTHER" id="PTHR10687">
    <property type="entry name" value="SECRETORY CARRIER-ASSOCIATED MEMBRANE PROTEIN SCAMP"/>
    <property type="match status" value="1"/>
</dbReference>
<dbReference type="Pfam" id="PF04144">
    <property type="entry name" value="SCAMP"/>
    <property type="match status" value="1"/>
</dbReference>
<protein>
    <recommendedName>
        <fullName>Secretory carrier-associated membrane protein 2</fullName>
        <shortName>RiSC</shortName>
        <shortName>Secretory carrier membrane protein 2</shortName>
    </recommendedName>
</protein>
<comment type="function">
    <text evidence="1">Probably involved in membrane trafficking.</text>
</comment>
<comment type="subcellular location">
    <subcellularLocation>
        <location evidence="1">Cell membrane</location>
        <topology evidence="1">Multi-pass membrane protein</topology>
    </subcellularLocation>
    <subcellularLocation>
        <location evidence="1">Cytoplasmic vesicle</location>
        <location evidence="1">Secretory vesicle membrane</location>
        <topology evidence="1">Multi-pass membrane protein</topology>
    </subcellularLocation>
</comment>
<comment type="similarity">
    <text evidence="4">Belongs to the SCAMP family.</text>
</comment>
<accession>Q7F613</accession>
<accession>B7EEY2</accession>
<accession>Q9M5P1</accession>
<organism>
    <name type="scientific">Oryza sativa subsp. japonica</name>
    <name type="common">Rice</name>
    <dbReference type="NCBI Taxonomy" id="39947"/>
    <lineage>
        <taxon>Eukaryota</taxon>
        <taxon>Viridiplantae</taxon>
        <taxon>Streptophyta</taxon>
        <taxon>Embryophyta</taxon>
        <taxon>Tracheophyta</taxon>
        <taxon>Spermatophyta</taxon>
        <taxon>Magnoliopsida</taxon>
        <taxon>Liliopsida</taxon>
        <taxon>Poales</taxon>
        <taxon>Poaceae</taxon>
        <taxon>BOP clade</taxon>
        <taxon>Oryzoideae</taxon>
        <taxon>Oryzeae</taxon>
        <taxon>Oryzinae</taxon>
        <taxon>Oryza</taxon>
        <taxon>Oryza sativa</taxon>
    </lineage>
</organism>
<evidence type="ECO:0000250" key="1"/>
<evidence type="ECO:0000255" key="2"/>
<evidence type="ECO:0000256" key="3">
    <source>
        <dbReference type="SAM" id="MobiDB-lite"/>
    </source>
</evidence>
<evidence type="ECO:0000305" key="4"/>
<feature type="chain" id="PRO_0000304907" description="Secretory carrier-associated membrane protein 2">
    <location>
        <begin position="1"/>
        <end position="286"/>
    </location>
</feature>
<feature type="topological domain" description="Cytoplasmic" evidence="2">
    <location>
        <begin position="1"/>
        <end position="126"/>
    </location>
</feature>
<feature type="transmembrane region" description="Helical" evidence="2">
    <location>
        <begin position="127"/>
        <end position="147"/>
    </location>
</feature>
<feature type="transmembrane region" description="Helical" evidence="2">
    <location>
        <begin position="152"/>
        <end position="172"/>
    </location>
</feature>
<feature type="transmembrane region" description="Helical" evidence="2">
    <location>
        <begin position="189"/>
        <end position="209"/>
    </location>
</feature>
<feature type="transmembrane region" description="Helical" evidence="2">
    <location>
        <begin position="237"/>
        <end position="257"/>
    </location>
</feature>
<feature type="topological domain" description="Cytoplasmic" evidence="2">
    <location>
        <begin position="258"/>
        <end position="286"/>
    </location>
</feature>
<feature type="region of interest" description="Disordered" evidence="3">
    <location>
        <begin position="1"/>
        <end position="63"/>
    </location>
</feature>
<feature type="coiled-coil region" evidence="2">
    <location>
        <begin position="52"/>
        <end position="89"/>
    </location>
</feature>
<feature type="compositionally biased region" description="Basic and acidic residues" evidence="3">
    <location>
        <begin position="1"/>
        <end position="10"/>
    </location>
</feature>
<feature type="compositionally biased region" description="Basic and acidic residues" evidence="3">
    <location>
        <begin position="54"/>
        <end position="63"/>
    </location>
</feature>
<proteinExistence type="evidence at transcript level"/>
<name>SCAM2_ORYSJ</name>
<reference key="1">
    <citation type="journal article" date="2000" name="Mol. Biol. Cell">
        <title>The secretory carrier membrane protein family: structure and membrane topology.</title>
        <authorList>
            <person name="Hubbard C."/>
            <person name="Singleton D."/>
            <person name="Rauch M."/>
            <person name="Jayasinghe S."/>
            <person name="Cafiso D."/>
            <person name="Castle D."/>
        </authorList>
    </citation>
    <scope>NUCLEOTIDE SEQUENCE [MRNA]</scope>
</reference>
<reference key="2">
    <citation type="journal article" date="2002" name="Nature">
        <title>The genome sequence and structure of rice chromosome 1.</title>
        <authorList>
            <person name="Sasaki T."/>
            <person name="Matsumoto T."/>
            <person name="Yamamoto K."/>
            <person name="Sakata K."/>
            <person name="Baba T."/>
            <person name="Katayose Y."/>
            <person name="Wu J."/>
            <person name="Niimura Y."/>
            <person name="Cheng Z."/>
            <person name="Nagamura Y."/>
            <person name="Antonio B.A."/>
            <person name="Kanamori H."/>
            <person name="Hosokawa S."/>
            <person name="Masukawa M."/>
            <person name="Arikawa K."/>
            <person name="Chiden Y."/>
            <person name="Hayashi M."/>
            <person name="Okamoto M."/>
            <person name="Ando T."/>
            <person name="Aoki H."/>
            <person name="Arita K."/>
            <person name="Hamada M."/>
            <person name="Harada C."/>
            <person name="Hijishita S."/>
            <person name="Honda M."/>
            <person name="Ichikawa Y."/>
            <person name="Idonuma A."/>
            <person name="Iijima M."/>
            <person name="Ikeda M."/>
            <person name="Ikeno M."/>
            <person name="Ito S."/>
            <person name="Ito T."/>
            <person name="Ito Y."/>
            <person name="Ito Y."/>
            <person name="Iwabuchi A."/>
            <person name="Kamiya K."/>
            <person name="Karasawa W."/>
            <person name="Katagiri S."/>
            <person name="Kikuta A."/>
            <person name="Kobayashi N."/>
            <person name="Kono I."/>
            <person name="Machita K."/>
            <person name="Maehara T."/>
            <person name="Mizuno H."/>
            <person name="Mizubayashi T."/>
            <person name="Mukai Y."/>
            <person name="Nagasaki H."/>
            <person name="Nakashima M."/>
            <person name="Nakama Y."/>
            <person name="Nakamichi Y."/>
            <person name="Nakamura M."/>
            <person name="Namiki N."/>
            <person name="Negishi M."/>
            <person name="Ohta I."/>
            <person name="Ono N."/>
            <person name="Saji S."/>
            <person name="Sakai K."/>
            <person name="Shibata M."/>
            <person name="Shimokawa T."/>
            <person name="Shomura A."/>
            <person name="Song J."/>
            <person name="Takazaki Y."/>
            <person name="Terasawa K."/>
            <person name="Tsuji K."/>
            <person name="Waki K."/>
            <person name="Yamagata H."/>
            <person name="Yamane H."/>
            <person name="Yoshiki S."/>
            <person name="Yoshihara R."/>
            <person name="Yukawa K."/>
            <person name="Zhong H."/>
            <person name="Iwama H."/>
            <person name="Endo T."/>
            <person name="Ito H."/>
            <person name="Hahn J.H."/>
            <person name="Kim H.-I."/>
            <person name="Eun M.-Y."/>
            <person name="Yano M."/>
            <person name="Jiang J."/>
            <person name="Gojobori T."/>
        </authorList>
    </citation>
    <scope>NUCLEOTIDE SEQUENCE [LARGE SCALE GENOMIC DNA]</scope>
    <source>
        <strain>cv. Nipponbare</strain>
    </source>
</reference>
<reference key="3">
    <citation type="journal article" date="2005" name="Nature">
        <title>The map-based sequence of the rice genome.</title>
        <authorList>
            <consortium name="International rice genome sequencing project (IRGSP)"/>
        </authorList>
    </citation>
    <scope>NUCLEOTIDE SEQUENCE [LARGE SCALE GENOMIC DNA]</scope>
    <source>
        <strain>cv. Nipponbare</strain>
    </source>
</reference>
<reference key="4">
    <citation type="journal article" date="2008" name="Nucleic Acids Res.">
        <title>The rice annotation project database (RAP-DB): 2008 update.</title>
        <authorList>
            <consortium name="The rice annotation project (RAP)"/>
        </authorList>
    </citation>
    <scope>GENOME REANNOTATION</scope>
    <source>
        <strain>cv. Nipponbare</strain>
    </source>
</reference>
<reference key="5">
    <citation type="journal article" date="2013" name="Rice">
        <title>Improvement of the Oryza sativa Nipponbare reference genome using next generation sequence and optical map data.</title>
        <authorList>
            <person name="Kawahara Y."/>
            <person name="de la Bastide M."/>
            <person name="Hamilton J.P."/>
            <person name="Kanamori H."/>
            <person name="McCombie W.R."/>
            <person name="Ouyang S."/>
            <person name="Schwartz D.C."/>
            <person name="Tanaka T."/>
            <person name="Wu J."/>
            <person name="Zhou S."/>
            <person name="Childs K.L."/>
            <person name="Davidson R.M."/>
            <person name="Lin H."/>
            <person name="Quesada-Ocampo L."/>
            <person name="Vaillancourt B."/>
            <person name="Sakai H."/>
            <person name="Lee S.S."/>
            <person name="Kim J."/>
            <person name="Numa H."/>
            <person name="Itoh T."/>
            <person name="Buell C.R."/>
            <person name="Matsumoto T."/>
        </authorList>
    </citation>
    <scope>GENOME REANNOTATION</scope>
    <source>
        <strain>cv. Nipponbare</strain>
    </source>
</reference>
<reference key="6">
    <citation type="journal article" date="2003" name="Science">
        <title>Collection, mapping, and annotation of over 28,000 cDNA clones from japonica rice.</title>
        <authorList>
            <consortium name="The rice full-length cDNA consortium"/>
        </authorList>
    </citation>
    <scope>NUCLEOTIDE SEQUENCE [LARGE SCALE MRNA]</scope>
    <source>
        <strain>cv. Nipponbare</strain>
    </source>
</reference>